<name>RL16_CLOB1</name>
<reference key="1">
    <citation type="journal article" date="2007" name="PLoS ONE">
        <title>Analysis of the neurotoxin complex genes in Clostridium botulinum A1-A4 and B1 strains: BoNT/A3, /Ba4 and /B1 clusters are located within plasmids.</title>
        <authorList>
            <person name="Smith T.J."/>
            <person name="Hill K.K."/>
            <person name="Foley B.T."/>
            <person name="Detter J.C."/>
            <person name="Munk A.C."/>
            <person name="Bruce D.C."/>
            <person name="Doggett N.A."/>
            <person name="Smith L.A."/>
            <person name="Marks J.D."/>
            <person name="Xie G."/>
            <person name="Brettin T.S."/>
        </authorList>
    </citation>
    <scope>NUCLEOTIDE SEQUENCE [LARGE SCALE GENOMIC DNA]</scope>
    <source>
        <strain>ATCC 19397 / Type A</strain>
    </source>
</reference>
<evidence type="ECO:0000255" key="1">
    <source>
        <dbReference type="HAMAP-Rule" id="MF_01342"/>
    </source>
</evidence>
<evidence type="ECO:0000305" key="2"/>
<keyword id="KW-0687">Ribonucleoprotein</keyword>
<keyword id="KW-0689">Ribosomal protein</keyword>
<keyword id="KW-0694">RNA-binding</keyword>
<keyword id="KW-0699">rRNA-binding</keyword>
<keyword id="KW-0820">tRNA-binding</keyword>
<accession>A7FZ62</accession>
<protein>
    <recommendedName>
        <fullName evidence="1">Large ribosomal subunit protein uL16</fullName>
    </recommendedName>
    <alternativeName>
        <fullName evidence="2">50S ribosomal protein L16</fullName>
    </alternativeName>
</protein>
<dbReference type="EMBL" id="CP000726">
    <property type="protein sequence ID" value="ABS32529.1"/>
    <property type="molecule type" value="Genomic_DNA"/>
</dbReference>
<dbReference type="RefSeq" id="WP_003357619.1">
    <property type="nucleotide sequence ID" value="NC_009697.1"/>
</dbReference>
<dbReference type="SMR" id="A7FZ62"/>
<dbReference type="GeneID" id="92940243"/>
<dbReference type="KEGG" id="cba:CLB_3530"/>
<dbReference type="HOGENOM" id="CLU_078858_2_1_9"/>
<dbReference type="GO" id="GO:0022625">
    <property type="term" value="C:cytosolic large ribosomal subunit"/>
    <property type="evidence" value="ECO:0007669"/>
    <property type="project" value="TreeGrafter"/>
</dbReference>
<dbReference type="GO" id="GO:0019843">
    <property type="term" value="F:rRNA binding"/>
    <property type="evidence" value="ECO:0007669"/>
    <property type="project" value="UniProtKB-UniRule"/>
</dbReference>
<dbReference type="GO" id="GO:0003735">
    <property type="term" value="F:structural constituent of ribosome"/>
    <property type="evidence" value="ECO:0007669"/>
    <property type="project" value="InterPro"/>
</dbReference>
<dbReference type="GO" id="GO:0000049">
    <property type="term" value="F:tRNA binding"/>
    <property type="evidence" value="ECO:0007669"/>
    <property type="project" value="UniProtKB-KW"/>
</dbReference>
<dbReference type="GO" id="GO:0006412">
    <property type="term" value="P:translation"/>
    <property type="evidence" value="ECO:0007669"/>
    <property type="project" value="UniProtKB-UniRule"/>
</dbReference>
<dbReference type="CDD" id="cd01433">
    <property type="entry name" value="Ribosomal_L16_L10e"/>
    <property type="match status" value="1"/>
</dbReference>
<dbReference type="FunFam" id="3.90.1170.10:FF:000001">
    <property type="entry name" value="50S ribosomal protein L16"/>
    <property type="match status" value="1"/>
</dbReference>
<dbReference type="Gene3D" id="3.90.1170.10">
    <property type="entry name" value="Ribosomal protein L10e/L16"/>
    <property type="match status" value="1"/>
</dbReference>
<dbReference type="HAMAP" id="MF_01342">
    <property type="entry name" value="Ribosomal_uL16"/>
    <property type="match status" value="1"/>
</dbReference>
<dbReference type="InterPro" id="IPR047873">
    <property type="entry name" value="Ribosomal_uL16"/>
</dbReference>
<dbReference type="InterPro" id="IPR000114">
    <property type="entry name" value="Ribosomal_uL16_bact-type"/>
</dbReference>
<dbReference type="InterPro" id="IPR020798">
    <property type="entry name" value="Ribosomal_uL16_CS"/>
</dbReference>
<dbReference type="InterPro" id="IPR016180">
    <property type="entry name" value="Ribosomal_uL16_dom"/>
</dbReference>
<dbReference type="InterPro" id="IPR036920">
    <property type="entry name" value="Ribosomal_uL16_sf"/>
</dbReference>
<dbReference type="NCBIfam" id="TIGR01164">
    <property type="entry name" value="rplP_bact"/>
    <property type="match status" value="1"/>
</dbReference>
<dbReference type="PANTHER" id="PTHR12220">
    <property type="entry name" value="50S/60S RIBOSOMAL PROTEIN L16"/>
    <property type="match status" value="1"/>
</dbReference>
<dbReference type="PANTHER" id="PTHR12220:SF13">
    <property type="entry name" value="LARGE RIBOSOMAL SUBUNIT PROTEIN UL16M"/>
    <property type="match status" value="1"/>
</dbReference>
<dbReference type="Pfam" id="PF00252">
    <property type="entry name" value="Ribosomal_L16"/>
    <property type="match status" value="1"/>
</dbReference>
<dbReference type="PRINTS" id="PR00060">
    <property type="entry name" value="RIBOSOMALL16"/>
</dbReference>
<dbReference type="SUPFAM" id="SSF54686">
    <property type="entry name" value="Ribosomal protein L16p/L10e"/>
    <property type="match status" value="1"/>
</dbReference>
<dbReference type="PROSITE" id="PS00586">
    <property type="entry name" value="RIBOSOMAL_L16_1"/>
    <property type="match status" value="1"/>
</dbReference>
<dbReference type="PROSITE" id="PS00701">
    <property type="entry name" value="RIBOSOMAL_L16_2"/>
    <property type="match status" value="1"/>
</dbReference>
<feature type="chain" id="PRO_1000054605" description="Large ribosomal subunit protein uL16">
    <location>
        <begin position="1"/>
        <end position="147"/>
    </location>
</feature>
<comment type="function">
    <text evidence="1">Binds 23S rRNA and is also seen to make contacts with the A and possibly P site tRNAs.</text>
</comment>
<comment type="subunit">
    <text evidence="1">Part of the 50S ribosomal subunit.</text>
</comment>
<comment type="similarity">
    <text evidence="1">Belongs to the universal ribosomal protein uL16 family.</text>
</comment>
<organism>
    <name type="scientific">Clostridium botulinum (strain ATCC 19397 / Type A)</name>
    <dbReference type="NCBI Taxonomy" id="441770"/>
    <lineage>
        <taxon>Bacteria</taxon>
        <taxon>Bacillati</taxon>
        <taxon>Bacillota</taxon>
        <taxon>Clostridia</taxon>
        <taxon>Eubacteriales</taxon>
        <taxon>Clostridiaceae</taxon>
        <taxon>Clostridium</taxon>
    </lineage>
</organism>
<gene>
    <name evidence="1" type="primary">rplP</name>
    <name type="ordered locus">CLB_3530</name>
</gene>
<proteinExistence type="inferred from homology"/>
<sequence length="147" mass="16542">MLMPKRVKRRKVQRGRMKGKATRGNFIAYGDFGIQATECGWITSNQIEAARIAINRYVKRGGKVWIKIFPDKPVTEKPAETRMGSGKGSPEYWVAVVKPGRVLFEISGVSETVAREAMRLASHKLPVKTKFVTRRDFEEMGGEVNEG</sequence>